<reference key="1">
    <citation type="journal article" date="2003" name="Proc. Natl. Acad. Sci. U.S.A.">
        <title>The complete genome sequence of the Arabidopsis and tomato pathogen Pseudomonas syringae pv. tomato DC3000.</title>
        <authorList>
            <person name="Buell C.R."/>
            <person name="Joardar V."/>
            <person name="Lindeberg M."/>
            <person name="Selengut J."/>
            <person name="Paulsen I.T."/>
            <person name="Gwinn M.L."/>
            <person name="Dodson R.J."/>
            <person name="DeBoy R.T."/>
            <person name="Durkin A.S."/>
            <person name="Kolonay J.F."/>
            <person name="Madupu R."/>
            <person name="Daugherty S.C."/>
            <person name="Brinkac L.M."/>
            <person name="Beanan M.J."/>
            <person name="Haft D.H."/>
            <person name="Nelson W.C."/>
            <person name="Davidsen T.M."/>
            <person name="Zafar N."/>
            <person name="Zhou L."/>
            <person name="Liu J."/>
            <person name="Yuan Q."/>
            <person name="Khouri H.M."/>
            <person name="Fedorova N.B."/>
            <person name="Tran B."/>
            <person name="Russell D."/>
            <person name="Berry K.J."/>
            <person name="Utterback T.R."/>
            <person name="Van Aken S.E."/>
            <person name="Feldblyum T.V."/>
            <person name="D'Ascenzo M."/>
            <person name="Deng W.-L."/>
            <person name="Ramos A.R."/>
            <person name="Alfano J.R."/>
            <person name="Cartinhour S."/>
            <person name="Chatterjee A.K."/>
            <person name="Delaney T.P."/>
            <person name="Lazarowitz S.G."/>
            <person name="Martin G.B."/>
            <person name="Schneider D.J."/>
            <person name="Tang X."/>
            <person name="Bender C.L."/>
            <person name="White O."/>
            <person name="Fraser C.M."/>
            <person name="Collmer A."/>
        </authorList>
    </citation>
    <scope>NUCLEOTIDE SEQUENCE [LARGE SCALE GENOMIC DNA]</scope>
    <source>
        <strain>ATCC BAA-871 / DC3000</strain>
    </source>
</reference>
<keyword id="KW-1185">Reference proteome</keyword>
<keyword id="KW-0687">Ribonucleoprotein</keyword>
<keyword id="KW-0689">Ribosomal protein</keyword>
<keyword id="KW-0694">RNA-binding</keyword>
<keyword id="KW-0699">rRNA-binding</keyword>
<comment type="function">
    <text evidence="1">Binds as a heterodimer with protein bS6 to the central domain of the 16S rRNA, where it helps stabilize the platform of the 30S subunit.</text>
</comment>
<comment type="subunit">
    <text evidence="1">Part of the 30S ribosomal subunit. Forms a tight heterodimer with protein bS6.</text>
</comment>
<comment type="similarity">
    <text evidence="1">Belongs to the bacterial ribosomal protein bS18 family.</text>
</comment>
<organism>
    <name type="scientific">Pseudomonas syringae pv. tomato (strain ATCC BAA-871 / DC3000)</name>
    <dbReference type="NCBI Taxonomy" id="223283"/>
    <lineage>
        <taxon>Bacteria</taxon>
        <taxon>Pseudomonadati</taxon>
        <taxon>Pseudomonadota</taxon>
        <taxon>Gammaproteobacteria</taxon>
        <taxon>Pseudomonadales</taxon>
        <taxon>Pseudomonadaceae</taxon>
        <taxon>Pseudomonas</taxon>
    </lineage>
</organism>
<dbReference type="EMBL" id="AE016853">
    <property type="protein sequence ID" value="AAO58360.1"/>
    <property type="molecule type" value="Genomic_DNA"/>
</dbReference>
<dbReference type="RefSeq" id="NP_794665.1">
    <property type="nucleotide sequence ID" value="NC_004578.1"/>
</dbReference>
<dbReference type="RefSeq" id="WP_002551829.1">
    <property type="nucleotide sequence ID" value="NC_004578.1"/>
</dbReference>
<dbReference type="SMR" id="Q87VK4"/>
<dbReference type="STRING" id="223283.PSPTO_4932"/>
<dbReference type="GeneID" id="98109115"/>
<dbReference type="KEGG" id="pst:PSPTO_4932"/>
<dbReference type="PATRIC" id="fig|223283.9.peg.5046"/>
<dbReference type="eggNOG" id="COG0238">
    <property type="taxonomic scope" value="Bacteria"/>
</dbReference>
<dbReference type="HOGENOM" id="CLU_148710_2_3_6"/>
<dbReference type="OrthoDB" id="9812008at2"/>
<dbReference type="PhylomeDB" id="Q87VK4"/>
<dbReference type="PRO" id="PR:Q87VK4"/>
<dbReference type="Proteomes" id="UP000002515">
    <property type="component" value="Chromosome"/>
</dbReference>
<dbReference type="GO" id="GO:0022627">
    <property type="term" value="C:cytosolic small ribosomal subunit"/>
    <property type="evidence" value="ECO:0007669"/>
    <property type="project" value="TreeGrafter"/>
</dbReference>
<dbReference type="GO" id="GO:0070181">
    <property type="term" value="F:small ribosomal subunit rRNA binding"/>
    <property type="evidence" value="ECO:0007669"/>
    <property type="project" value="TreeGrafter"/>
</dbReference>
<dbReference type="GO" id="GO:0003735">
    <property type="term" value="F:structural constituent of ribosome"/>
    <property type="evidence" value="ECO:0007669"/>
    <property type="project" value="InterPro"/>
</dbReference>
<dbReference type="GO" id="GO:0006412">
    <property type="term" value="P:translation"/>
    <property type="evidence" value="ECO:0007669"/>
    <property type="project" value="UniProtKB-UniRule"/>
</dbReference>
<dbReference type="FunFam" id="4.10.640.10:FF:000001">
    <property type="entry name" value="30S ribosomal protein S18"/>
    <property type="match status" value="1"/>
</dbReference>
<dbReference type="Gene3D" id="4.10.640.10">
    <property type="entry name" value="Ribosomal protein S18"/>
    <property type="match status" value="1"/>
</dbReference>
<dbReference type="HAMAP" id="MF_00270">
    <property type="entry name" value="Ribosomal_bS18"/>
    <property type="match status" value="1"/>
</dbReference>
<dbReference type="InterPro" id="IPR001648">
    <property type="entry name" value="Ribosomal_bS18"/>
</dbReference>
<dbReference type="InterPro" id="IPR018275">
    <property type="entry name" value="Ribosomal_bS18_CS"/>
</dbReference>
<dbReference type="InterPro" id="IPR036870">
    <property type="entry name" value="Ribosomal_bS18_sf"/>
</dbReference>
<dbReference type="NCBIfam" id="TIGR00165">
    <property type="entry name" value="S18"/>
    <property type="match status" value="1"/>
</dbReference>
<dbReference type="PANTHER" id="PTHR13479">
    <property type="entry name" value="30S RIBOSOMAL PROTEIN S18"/>
    <property type="match status" value="1"/>
</dbReference>
<dbReference type="PANTHER" id="PTHR13479:SF40">
    <property type="entry name" value="SMALL RIBOSOMAL SUBUNIT PROTEIN BS18M"/>
    <property type="match status" value="1"/>
</dbReference>
<dbReference type="Pfam" id="PF01084">
    <property type="entry name" value="Ribosomal_S18"/>
    <property type="match status" value="1"/>
</dbReference>
<dbReference type="PRINTS" id="PR00974">
    <property type="entry name" value="RIBOSOMALS18"/>
</dbReference>
<dbReference type="SUPFAM" id="SSF46911">
    <property type="entry name" value="Ribosomal protein S18"/>
    <property type="match status" value="1"/>
</dbReference>
<dbReference type="PROSITE" id="PS00057">
    <property type="entry name" value="RIBOSOMAL_S18"/>
    <property type="match status" value="1"/>
</dbReference>
<feature type="chain" id="PRO_0000111211" description="Small ribosomal subunit protein bS18">
    <location>
        <begin position="1"/>
        <end position="76"/>
    </location>
</feature>
<protein>
    <recommendedName>
        <fullName evidence="1">Small ribosomal subunit protein bS18</fullName>
    </recommendedName>
    <alternativeName>
        <fullName evidence="2">30S ribosomal protein S18</fullName>
    </alternativeName>
</protein>
<sequence>MARFFRRRKFCRFTAEDVKEIDYKDLNTLKAYVSETGKIVPSRITGTKARYQRQLATAIKRARFLALLAYTDSHGR</sequence>
<proteinExistence type="inferred from homology"/>
<evidence type="ECO:0000255" key="1">
    <source>
        <dbReference type="HAMAP-Rule" id="MF_00270"/>
    </source>
</evidence>
<evidence type="ECO:0000305" key="2"/>
<accession>Q87VK4</accession>
<name>RS18_PSESM</name>
<gene>
    <name evidence="1" type="primary">rpsR</name>
    <name type="ordered locus">PSPTO_4932</name>
</gene>